<sequence length="174" mass="19875">MKVLFLTIALSLFSILQAQDSSSSEEQFEGTYFVKAIVTDSEFFEKNKPKALSPLTVTHLSNGDLEAKFTTNMNGICEEIKMKFEKTDKPGIFSTNDGSRQVLIEKTSVRDHWILFCEGELHGMQVRIAKLLGPHTDENPKAFQEFKKFVSLKRFNEEKINIPRQTETCIPEHV</sequence>
<dbReference type="EMBL" id="AF319463">
    <property type="protein sequence ID" value="AAL85634.1"/>
    <property type="molecule type" value="mRNA"/>
</dbReference>
<dbReference type="SMR" id="Q8SQ30"/>
<dbReference type="GO" id="GO:0005615">
    <property type="term" value="C:extracellular space"/>
    <property type="evidence" value="ECO:0007669"/>
    <property type="project" value="TreeGrafter"/>
</dbReference>
<dbReference type="GO" id="GO:0036094">
    <property type="term" value="F:small molecule binding"/>
    <property type="evidence" value="ECO:0007669"/>
    <property type="project" value="InterPro"/>
</dbReference>
<dbReference type="CDD" id="cd19414">
    <property type="entry name" value="lipocalin_1_3_4_13-like"/>
    <property type="match status" value="1"/>
</dbReference>
<dbReference type="Gene3D" id="2.40.128.20">
    <property type="match status" value="1"/>
</dbReference>
<dbReference type="InterPro" id="IPR012674">
    <property type="entry name" value="Calycin"/>
</dbReference>
<dbReference type="InterPro" id="IPR002345">
    <property type="entry name" value="Lipocalin"/>
</dbReference>
<dbReference type="InterPro" id="IPR000566">
    <property type="entry name" value="Lipocln_cytosolic_FA-bd_dom"/>
</dbReference>
<dbReference type="InterPro" id="IPR002450">
    <property type="entry name" value="von_Ebner_gland"/>
</dbReference>
<dbReference type="PANTHER" id="PTHR11430">
    <property type="entry name" value="LIPOCALIN"/>
    <property type="match status" value="1"/>
</dbReference>
<dbReference type="PANTHER" id="PTHR11430:SF124">
    <property type="entry name" value="LIPOCALIN 1-LIKE PROTEIN 1-RELATED"/>
    <property type="match status" value="1"/>
</dbReference>
<dbReference type="Pfam" id="PF00061">
    <property type="entry name" value="Lipocalin"/>
    <property type="match status" value="1"/>
</dbReference>
<dbReference type="PRINTS" id="PR01175">
    <property type="entry name" value="VNEBNERGLAND"/>
</dbReference>
<dbReference type="SUPFAM" id="SSF50814">
    <property type="entry name" value="Lipocalins"/>
    <property type="match status" value="1"/>
</dbReference>
<comment type="function">
    <text>Probably serves a role in the transport of a small ligand released during the hydrolysis of milk fat.</text>
</comment>
<comment type="subcellular location">
    <subcellularLocation>
        <location>Secreted</location>
    </subcellularLocation>
</comment>
<comment type="tissue specificity">
    <text>Mammary gland specific. Secreted in milk.</text>
</comment>
<comment type="developmental stage">
    <text>Produced during the late phase of lactation.</text>
</comment>
<comment type="similarity">
    <text evidence="3">Belongs to the calycin superfamily. Lipocalin family.</text>
</comment>
<evidence type="ECO:0000250" key="1"/>
<evidence type="ECO:0000255" key="2"/>
<evidence type="ECO:0000305" key="3"/>
<reference key="1">
    <citation type="journal article" date="2002" name="Gene">
        <title>Expression of novel lipocalin-like milk protein gene is developmentally-regulated during lactation in the tammar wallaby, Macropus eugenii.</title>
        <authorList>
            <person name="Trott J.F."/>
            <person name="Wilson M.J."/>
            <person name="Hovey R.C."/>
            <person name="Shaw D.C."/>
            <person name="Nicholas K.R."/>
        </authorList>
    </citation>
    <scope>NUCLEOTIDE SEQUENCE [MRNA]</scope>
    <source>
        <tissue>Mammary gland</tissue>
    </source>
</reference>
<feature type="signal peptide" evidence="2">
    <location>
        <begin position="1"/>
        <end position="18"/>
    </location>
</feature>
<feature type="chain" id="PRO_0000017986" description="Late lactation protein B">
    <location>
        <begin position="19"/>
        <end position="174"/>
    </location>
</feature>
<feature type="disulfide bond" evidence="1">
    <location>
        <begin position="77"/>
        <end position="169"/>
    </location>
</feature>
<gene>
    <name type="primary">LLPB</name>
</gene>
<accession>Q8SQ30</accession>
<organism>
    <name type="scientific">Notamacropus eugenii</name>
    <name type="common">Tammar wallaby</name>
    <name type="synonym">Macropus eugenii</name>
    <dbReference type="NCBI Taxonomy" id="9315"/>
    <lineage>
        <taxon>Eukaryota</taxon>
        <taxon>Metazoa</taxon>
        <taxon>Chordata</taxon>
        <taxon>Craniata</taxon>
        <taxon>Vertebrata</taxon>
        <taxon>Euteleostomi</taxon>
        <taxon>Mammalia</taxon>
        <taxon>Metatheria</taxon>
        <taxon>Diprotodontia</taxon>
        <taxon>Macropodidae</taxon>
        <taxon>Notamacropus</taxon>
    </lineage>
</organism>
<name>LLPB_NOTEU</name>
<keyword id="KW-1015">Disulfide bond</keyword>
<keyword id="KW-0494">Milk protein</keyword>
<keyword id="KW-0964">Secreted</keyword>
<keyword id="KW-0732">Signal</keyword>
<keyword id="KW-0813">Transport</keyword>
<protein>
    <recommendedName>
        <fullName>Late lactation protein B</fullName>
        <shortName>LLP-B</shortName>
    </recommendedName>
</protein>
<proteinExistence type="evidence at transcript level"/>